<organism>
    <name type="scientific">Staphylococcus aureus (strain MSSA476)</name>
    <dbReference type="NCBI Taxonomy" id="282459"/>
    <lineage>
        <taxon>Bacteria</taxon>
        <taxon>Bacillati</taxon>
        <taxon>Bacillota</taxon>
        <taxon>Bacilli</taxon>
        <taxon>Bacillales</taxon>
        <taxon>Staphylococcaceae</taxon>
        <taxon>Staphylococcus</taxon>
    </lineage>
</organism>
<keyword id="KW-0285">Flavoprotein</keyword>
<keyword id="KW-0288">FMN</keyword>
<keyword id="KW-0521">NADP</keyword>
<keyword id="KW-0560">Oxidoreductase</keyword>
<comment type="function">
    <text evidence="1">Reduces FMN, organic nitro compounds and disulfide DTNB. Involved in maintenance of the cellular redox state and the disulfide stress response (By similarity).</text>
</comment>
<comment type="cofactor">
    <cofactor evidence="1">
        <name>FMN</name>
        <dbReference type="ChEBI" id="CHEBI:58210"/>
    </cofactor>
</comment>
<comment type="similarity">
    <text evidence="2">Belongs to the flavin oxidoreductase frp family.</text>
</comment>
<gene>
    <name type="primary">nfrA</name>
    <name type="ordered locus">SAS0359</name>
</gene>
<reference key="1">
    <citation type="journal article" date="2004" name="Proc. Natl. Acad. Sci. U.S.A.">
        <title>Complete genomes of two clinical Staphylococcus aureus strains: evidence for the rapid evolution of virulence and drug resistance.</title>
        <authorList>
            <person name="Holden M.T.G."/>
            <person name="Feil E.J."/>
            <person name="Lindsay J.A."/>
            <person name="Peacock S.J."/>
            <person name="Day N.P.J."/>
            <person name="Enright M.C."/>
            <person name="Foster T.J."/>
            <person name="Moore C.E."/>
            <person name="Hurst L."/>
            <person name="Atkin R."/>
            <person name="Barron A."/>
            <person name="Bason N."/>
            <person name="Bentley S.D."/>
            <person name="Chillingworth C."/>
            <person name="Chillingworth T."/>
            <person name="Churcher C."/>
            <person name="Clark L."/>
            <person name="Corton C."/>
            <person name="Cronin A."/>
            <person name="Doggett J."/>
            <person name="Dowd L."/>
            <person name="Feltwell T."/>
            <person name="Hance Z."/>
            <person name="Harris B."/>
            <person name="Hauser H."/>
            <person name="Holroyd S."/>
            <person name="Jagels K."/>
            <person name="James K.D."/>
            <person name="Lennard N."/>
            <person name="Line A."/>
            <person name="Mayes R."/>
            <person name="Moule S."/>
            <person name="Mungall K."/>
            <person name="Ormond D."/>
            <person name="Quail M.A."/>
            <person name="Rabbinowitsch E."/>
            <person name="Rutherford K.M."/>
            <person name="Sanders M."/>
            <person name="Sharp S."/>
            <person name="Simmonds M."/>
            <person name="Stevens K."/>
            <person name="Whitehead S."/>
            <person name="Barrell B.G."/>
            <person name="Spratt B.G."/>
            <person name="Parkhill J."/>
        </authorList>
    </citation>
    <scope>NUCLEOTIDE SEQUENCE [LARGE SCALE GENOMIC DNA]</scope>
    <source>
        <strain>MSSA476</strain>
    </source>
</reference>
<sequence>MSEHVYNLVKKHHSVRKFKNKPLSEDVVKKLVEAGQSASTSSFLQAYSIIGIDDEKIKENLREVSGQPYVVENGYLFVFVIDYYRHHLVDQHAETDMENAYGSTEGLLVGAIDAALVAENIAVTAEDMGYGIVFLGSLRNDVERVREILDLPDYVFPVFGMAVGEPADDENGAAKPRLPFDHVFHHNKYHADKETQYAQMADYDQTISEYYNQRTNGNRKETWSQQIEMFLGNKARLDMLEQLQKSGLIQR</sequence>
<evidence type="ECO:0000250" key="1"/>
<evidence type="ECO:0000305" key="2"/>
<accession>Q6GC90</accession>
<proteinExistence type="inferred from homology"/>
<protein>
    <recommendedName>
        <fullName>NADPH-dependent oxidoreductase</fullName>
        <ecNumber>1.6.-.-</ecNumber>
    </recommendedName>
</protein>
<dbReference type="EC" id="1.6.-.-"/>
<dbReference type="EMBL" id="BX571857">
    <property type="protein sequence ID" value="CAG42130.1"/>
    <property type="molecule type" value="Genomic_DNA"/>
</dbReference>
<dbReference type="SMR" id="Q6GC90"/>
<dbReference type="KEGG" id="sas:SAS0359"/>
<dbReference type="HOGENOM" id="CLU_070764_0_0_9"/>
<dbReference type="GO" id="GO:0016491">
    <property type="term" value="F:oxidoreductase activity"/>
    <property type="evidence" value="ECO:0007669"/>
    <property type="project" value="UniProtKB-KW"/>
</dbReference>
<dbReference type="CDD" id="cd02146">
    <property type="entry name" value="NfsA-like"/>
    <property type="match status" value="1"/>
</dbReference>
<dbReference type="Gene3D" id="3.40.109.10">
    <property type="entry name" value="NADH Oxidase"/>
    <property type="match status" value="1"/>
</dbReference>
<dbReference type="InterPro" id="IPR016446">
    <property type="entry name" value="Flavin_OxRdtase_Frp"/>
</dbReference>
<dbReference type="InterPro" id="IPR029479">
    <property type="entry name" value="Nitroreductase"/>
</dbReference>
<dbReference type="InterPro" id="IPR000415">
    <property type="entry name" value="Nitroreductase-like"/>
</dbReference>
<dbReference type="NCBIfam" id="NF008033">
    <property type="entry name" value="PRK10765.1"/>
    <property type="match status" value="1"/>
</dbReference>
<dbReference type="PANTHER" id="PTHR43425:SF3">
    <property type="entry name" value="NADPH-DEPENDENT OXIDOREDUCTASE"/>
    <property type="match status" value="1"/>
</dbReference>
<dbReference type="PANTHER" id="PTHR43425">
    <property type="entry name" value="OXYGEN-INSENSITIVE NADPH NITROREDUCTASE"/>
    <property type="match status" value="1"/>
</dbReference>
<dbReference type="Pfam" id="PF00881">
    <property type="entry name" value="Nitroreductase"/>
    <property type="match status" value="1"/>
</dbReference>
<dbReference type="PIRSF" id="PIRSF005426">
    <property type="entry name" value="Frp"/>
    <property type="match status" value="1"/>
</dbReference>
<dbReference type="SUPFAM" id="SSF55469">
    <property type="entry name" value="FMN-dependent nitroreductase-like"/>
    <property type="match status" value="1"/>
</dbReference>
<name>NFRA_STAAS</name>
<feature type="chain" id="PRO_0000239724" description="NADPH-dependent oxidoreductase">
    <location>
        <begin position="1"/>
        <end position="251"/>
    </location>
</feature>